<feature type="chain" id="PRO_0000069205" description="C3a anaphylatoxin chemotactic receptor">
    <location>
        <begin position="1"/>
        <end position="473"/>
    </location>
</feature>
<feature type="topological domain" description="Extracellular" evidence="3">
    <location>
        <begin position="1"/>
        <end position="23"/>
    </location>
</feature>
<feature type="transmembrane region" description="Helical; Name=1" evidence="3">
    <location>
        <begin position="24"/>
        <end position="46"/>
    </location>
</feature>
<feature type="topological domain" description="Cytoplasmic" evidence="3">
    <location>
        <begin position="47"/>
        <end position="57"/>
    </location>
</feature>
<feature type="transmembrane region" description="Helical; Name=2" evidence="3">
    <location>
        <begin position="58"/>
        <end position="80"/>
    </location>
</feature>
<feature type="topological domain" description="Extracellular" evidence="3">
    <location>
        <begin position="81"/>
        <end position="96"/>
    </location>
</feature>
<feature type="transmembrane region" description="Helical; Name=3" evidence="3">
    <location>
        <begin position="97"/>
        <end position="118"/>
    </location>
</feature>
<feature type="topological domain" description="Cytoplasmic" evidence="3">
    <location>
        <begin position="119"/>
        <end position="139"/>
    </location>
</feature>
<feature type="transmembrane region" description="Helical; Name=4" evidence="3">
    <location>
        <begin position="140"/>
        <end position="160"/>
    </location>
</feature>
<feature type="topological domain" description="Extracellular" evidence="3">
    <location>
        <begin position="161"/>
        <end position="329"/>
    </location>
</feature>
<feature type="transmembrane region" description="Helical; Name=5" evidence="3">
    <location>
        <begin position="330"/>
        <end position="349"/>
    </location>
</feature>
<feature type="topological domain" description="Cytoplasmic" evidence="3">
    <location>
        <begin position="350"/>
        <end position="366"/>
    </location>
</feature>
<feature type="transmembrane region" description="Helical; Name=6" evidence="3">
    <location>
        <begin position="367"/>
        <end position="389"/>
    </location>
</feature>
<feature type="topological domain" description="Extracellular" evidence="3">
    <location>
        <begin position="390"/>
        <end position="406"/>
    </location>
</feature>
<feature type="transmembrane region" description="Helical; Name=7" evidence="3">
    <location>
        <begin position="407"/>
        <end position="427"/>
    </location>
</feature>
<feature type="topological domain" description="Cytoplasmic" evidence="3">
    <location>
        <begin position="428"/>
        <end position="473"/>
    </location>
</feature>
<feature type="region of interest" description="Disordered" evidence="5">
    <location>
        <begin position="233"/>
        <end position="252"/>
    </location>
</feature>
<feature type="modified residue" description="Sulfotyrosine" evidence="1">
    <location>
        <position position="174"/>
    </location>
</feature>
<feature type="modified residue" description="Sulfotyrosine" evidence="1">
    <location>
        <position position="184"/>
    </location>
</feature>
<feature type="modified residue" description="Sulfotyrosine" evidence="1">
    <location>
        <position position="308"/>
    </location>
</feature>
<feature type="modified residue" description="Phosphoserine" evidence="2">
    <location>
        <position position="448"/>
    </location>
</feature>
<feature type="modified residue" description="Phosphothreonine" evidence="2">
    <location>
        <position position="452"/>
    </location>
</feature>
<feature type="glycosylation site" description="N-linked (GlcNAc...) asparagine" evidence="3">
    <location>
        <position position="9"/>
    </location>
</feature>
<feature type="glycosylation site" description="N-linked (GlcNAc...) asparagine" evidence="3">
    <location>
        <position position="201"/>
    </location>
</feature>
<feature type="disulfide bond" evidence="4">
    <location>
        <begin position="95"/>
        <end position="172"/>
    </location>
</feature>
<accession>O55197</accession>
<dbReference type="EMBL" id="U86379">
    <property type="protein sequence ID" value="AAC40071.1"/>
    <property type="molecule type" value="mRNA"/>
</dbReference>
<dbReference type="PIR" id="JC5835">
    <property type="entry name" value="JC5835"/>
</dbReference>
<dbReference type="RefSeq" id="NP_114449.1">
    <property type="nucleotide sequence ID" value="NM_032060.1"/>
</dbReference>
<dbReference type="SMR" id="O55197"/>
<dbReference type="FunCoup" id="O55197">
    <property type="interactions" value="117"/>
</dbReference>
<dbReference type="STRING" id="10116.ENSRNOP00000012216"/>
<dbReference type="GlyCosmos" id="O55197">
    <property type="glycosylation" value="2 sites, No reported glycans"/>
</dbReference>
<dbReference type="GlyGen" id="O55197">
    <property type="glycosylation" value="2 sites"/>
</dbReference>
<dbReference type="PhosphoSitePlus" id="O55197"/>
<dbReference type="PaxDb" id="10116-ENSRNOP00000012216"/>
<dbReference type="GeneID" id="84007"/>
<dbReference type="KEGG" id="rno:84007"/>
<dbReference type="UCSC" id="RGD:620537">
    <property type="organism name" value="rat"/>
</dbReference>
<dbReference type="AGR" id="RGD:620537"/>
<dbReference type="CTD" id="719"/>
<dbReference type="RGD" id="620537">
    <property type="gene designation" value="C3ar1"/>
</dbReference>
<dbReference type="eggNOG" id="ENOG502R35Z">
    <property type="taxonomic scope" value="Eukaryota"/>
</dbReference>
<dbReference type="InParanoid" id="O55197"/>
<dbReference type="OrthoDB" id="10037617at2759"/>
<dbReference type="PhylomeDB" id="O55197"/>
<dbReference type="Reactome" id="R-RNO-375276">
    <property type="pathway name" value="Peptide ligand-binding receptors"/>
</dbReference>
<dbReference type="Reactome" id="R-RNO-418594">
    <property type="pathway name" value="G alpha (i) signalling events"/>
</dbReference>
<dbReference type="Reactome" id="R-RNO-6798695">
    <property type="pathway name" value="Neutrophil degranulation"/>
</dbReference>
<dbReference type="Reactome" id="R-RNO-977606">
    <property type="pathway name" value="Regulation of Complement cascade"/>
</dbReference>
<dbReference type="PRO" id="PR:O55197"/>
<dbReference type="Proteomes" id="UP000002494">
    <property type="component" value="Unplaced"/>
</dbReference>
<dbReference type="GO" id="GO:0005886">
    <property type="term" value="C:plasma membrane"/>
    <property type="evidence" value="ECO:0000318"/>
    <property type="project" value="GO_Central"/>
</dbReference>
<dbReference type="GO" id="GO:0001850">
    <property type="term" value="F:complement component C3a binding"/>
    <property type="evidence" value="ECO:0000314"/>
    <property type="project" value="RGD"/>
</dbReference>
<dbReference type="GO" id="GO:0004876">
    <property type="term" value="F:complement component C3a receptor activity"/>
    <property type="evidence" value="ECO:0000314"/>
    <property type="project" value="RGD"/>
</dbReference>
<dbReference type="GO" id="GO:0004878">
    <property type="term" value="F:complement component C5a receptor activity"/>
    <property type="evidence" value="ECO:0000318"/>
    <property type="project" value="GO_Central"/>
</dbReference>
<dbReference type="GO" id="GO:0004930">
    <property type="term" value="F:G protein-coupled receptor activity"/>
    <property type="evidence" value="ECO:0000266"/>
    <property type="project" value="RGD"/>
</dbReference>
<dbReference type="GO" id="GO:0019722">
    <property type="term" value="P:calcium-mediated signaling"/>
    <property type="evidence" value="ECO:0000266"/>
    <property type="project" value="RGD"/>
</dbReference>
<dbReference type="GO" id="GO:0006935">
    <property type="term" value="P:chemotaxis"/>
    <property type="evidence" value="ECO:0007669"/>
    <property type="project" value="UniProtKB-KW"/>
</dbReference>
<dbReference type="GO" id="GO:0002430">
    <property type="term" value="P:complement receptor mediated signaling pathway"/>
    <property type="evidence" value="ECO:0000266"/>
    <property type="project" value="RGD"/>
</dbReference>
<dbReference type="GO" id="GO:0006954">
    <property type="term" value="P:inflammatory response"/>
    <property type="evidence" value="ECO:0000318"/>
    <property type="project" value="GO_Central"/>
</dbReference>
<dbReference type="GO" id="GO:0007200">
    <property type="term" value="P:phospholipase C-activating G protein-coupled receptor signaling pathway"/>
    <property type="evidence" value="ECO:0000318"/>
    <property type="project" value="GO_Central"/>
</dbReference>
<dbReference type="GO" id="GO:0045766">
    <property type="term" value="P:positive regulation of angiogenesis"/>
    <property type="evidence" value="ECO:0000266"/>
    <property type="project" value="RGD"/>
</dbReference>
<dbReference type="GO" id="GO:0030335">
    <property type="term" value="P:positive regulation of cell migration"/>
    <property type="evidence" value="ECO:0000315"/>
    <property type="project" value="RGD"/>
</dbReference>
<dbReference type="GO" id="GO:0007204">
    <property type="term" value="P:positive regulation of cytosolic calcium ion concentration"/>
    <property type="evidence" value="ECO:0000314"/>
    <property type="project" value="RGD"/>
</dbReference>
<dbReference type="GO" id="GO:2000573">
    <property type="term" value="P:positive regulation of DNA biosynthetic process"/>
    <property type="evidence" value="ECO:0000315"/>
    <property type="project" value="RGD"/>
</dbReference>
<dbReference type="GO" id="GO:0072126">
    <property type="term" value="P:positive regulation of glomerular mesangial cell proliferation"/>
    <property type="evidence" value="ECO:0000315"/>
    <property type="project" value="RGD"/>
</dbReference>
<dbReference type="GO" id="GO:0010759">
    <property type="term" value="P:positive regulation of macrophage chemotaxis"/>
    <property type="evidence" value="ECO:0000266"/>
    <property type="project" value="RGD"/>
</dbReference>
<dbReference type="GO" id="GO:0090023">
    <property type="term" value="P:positive regulation of neutrophil chemotaxis"/>
    <property type="evidence" value="ECO:0000266"/>
    <property type="project" value="RGD"/>
</dbReference>
<dbReference type="GO" id="GO:0048661">
    <property type="term" value="P:positive regulation of smooth muscle cell proliferation"/>
    <property type="evidence" value="ECO:0000315"/>
    <property type="project" value="RGD"/>
</dbReference>
<dbReference type="GO" id="GO:0010575">
    <property type="term" value="P:positive regulation of vascular endothelial growth factor production"/>
    <property type="evidence" value="ECO:0000266"/>
    <property type="project" value="RGD"/>
</dbReference>
<dbReference type="GO" id="GO:0008217">
    <property type="term" value="P:regulation of blood pressure"/>
    <property type="evidence" value="ECO:0000314"/>
    <property type="project" value="RGD"/>
</dbReference>
<dbReference type="GO" id="GO:0002462">
    <property type="term" value="P:tolerance induction to nonself antigen"/>
    <property type="evidence" value="ECO:0000315"/>
    <property type="project" value="RGD"/>
</dbReference>
<dbReference type="FunFam" id="1.20.1070.10:FF:000269">
    <property type="entry name" value="C3a anaphylatoxin chemotactic receptor"/>
    <property type="match status" value="1"/>
</dbReference>
<dbReference type="FunFam" id="1.20.1070.10:FF:000284">
    <property type="entry name" value="C3a anaphylatoxin chemotactic receptor"/>
    <property type="match status" value="1"/>
</dbReference>
<dbReference type="Gene3D" id="1.20.1070.10">
    <property type="entry name" value="Rhodopsin 7-helix transmembrane proteins"/>
    <property type="match status" value="2"/>
</dbReference>
<dbReference type="InterPro" id="IPR001644">
    <property type="entry name" value="Anaphtx_C3AR1"/>
</dbReference>
<dbReference type="InterPro" id="IPR002234">
    <property type="entry name" value="Anphylx_rcpt_C3a/C5a1-2"/>
</dbReference>
<dbReference type="InterPro" id="IPR000826">
    <property type="entry name" value="Formyl_rcpt-rel"/>
</dbReference>
<dbReference type="InterPro" id="IPR000276">
    <property type="entry name" value="GPCR_Rhodpsn"/>
</dbReference>
<dbReference type="InterPro" id="IPR017452">
    <property type="entry name" value="GPCR_Rhodpsn_7TM"/>
</dbReference>
<dbReference type="PANTHER" id="PTHR24225:SF28">
    <property type="entry name" value="C3A ANAPHYLATOXIN CHEMOTACTIC RECEPTOR"/>
    <property type="match status" value="1"/>
</dbReference>
<dbReference type="PANTHER" id="PTHR24225">
    <property type="entry name" value="CHEMOTACTIC RECEPTOR"/>
    <property type="match status" value="1"/>
</dbReference>
<dbReference type="Pfam" id="PF00001">
    <property type="entry name" value="7tm_1"/>
    <property type="match status" value="2"/>
</dbReference>
<dbReference type="PRINTS" id="PR01104">
    <property type="entry name" value="ANPHYLATOXNR"/>
</dbReference>
<dbReference type="PRINTS" id="PR01060">
    <property type="entry name" value="C3ANPHYLTXNR"/>
</dbReference>
<dbReference type="PRINTS" id="PR00237">
    <property type="entry name" value="GPCRRHODOPSN"/>
</dbReference>
<dbReference type="SUPFAM" id="SSF81321">
    <property type="entry name" value="Family A G protein-coupled receptor-like"/>
    <property type="match status" value="1"/>
</dbReference>
<dbReference type="PROSITE" id="PS00237">
    <property type="entry name" value="G_PROTEIN_RECEP_F1_1"/>
    <property type="match status" value="1"/>
</dbReference>
<dbReference type="PROSITE" id="PS50262">
    <property type="entry name" value="G_PROTEIN_RECEP_F1_2"/>
    <property type="match status" value="1"/>
</dbReference>
<organism>
    <name type="scientific">Rattus norvegicus</name>
    <name type="common">Rat</name>
    <dbReference type="NCBI Taxonomy" id="10116"/>
    <lineage>
        <taxon>Eukaryota</taxon>
        <taxon>Metazoa</taxon>
        <taxon>Chordata</taxon>
        <taxon>Craniata</taxon>
        <taxon>Vertebrata</taxon>
        <taxon>Euteleostomi</taxon>
        <taxon>Mammalia</taxon>
        <taxon>Eutheria</taxon>
        <taxon>Euarchontoglires</taxon>
        <taxon>Glires</taxon>
        <taxon>Rodentia</taxon>
        <taxon>Myomorpha</taxon>
        <taxon>Muroidea</taxon>
        <taxon>Muridae</taxon>
        <taxon>Murinae</taxon>
        <taxon>Rattus</taxon>
    </lineage>
</organism>
<proteinExistence type="evidence at protein level"/>
<sequence length="473" mass="52896">MESFTADTNSTDLHSRPLFKPQDIASMVILSLTCLLGLPGNGLVLWVAGVKMKRTVNTVWFLHLTLADFLCCLSLPFSVAHLILRGHWPYGLFLCKLIPSVIILNMFASVFLLTAISLDRCLMVHKPIWCQNHRSVRTAFAVCGCVWVVTFVMCIPVFVYRDLLVVDDYSVCGYNFDSSRAYDYWDYMYNSHLPEINPPDNSTGHVDDRTAPSSSVPARDLWTATTALQSQTFHTSPEDPFSQDSASQQPHYGGKPPTVLIATIPGGFPVEDHKSNTLNTGAFLSAHTEPSLTASSSPLYAHDFPDDYFDQLMYGNHAWTPQVAITISRLVVGFLVPFFIMITCYSLIVFRMRKTNLTKSRNKTLRVAVAVVTVFFVCWIPYHIVGILLVITDQESALREVVLPWDHMSIALASANSCFNPFLYALLGKDFRKKARQSVKGILEAAFSEELTHSTSCTQDKAPSKRNHMSTDV</sequence>
<reference key="1">
    <citation type="journal article" date="1998" name="Biochem. Biophys. Res. Commun.">
        <title>Cloning and characterization of rat C3a receptor: differential expression of rat C3a and C5a receptors by LPS stimulation.</title>
        <authorList>
            <person name="Fukuoka Y."/>
            <person name="Ember J.A."/>
            <person name="Hugli T.E."/>
        </authorList>
    </citation>
    <scope>NUCLEOTIDE SEQUENCE [MRNA]</scope>
    <source>
        <strain>Wistar</strain>
        <tissue>Lung</tissue>
    </source>
</reference>
<reference key="2">
    <citation type="journal article" date="2013" name="J. Biol. Chem.">
        <title>Identification of the C3a receptor (C3AR1) as the target of the VGF-derived peptide TLQP-21 in rodent cells.</title>
        <authorList>
            <person name="Hannedouche S."/>
            <person name="Beck V."/>
            <person name="Leighton-Davies J."/>
            <person name="Beibel M."/>
            <person name="Roma G."/>
            <person name="Oakeley E.J."/>
            <person name="Lannoy V."/>
            <person name="Bernard J."/>
            <person name="Hamon J."/>
            <person name="Barbieri S."/>
            <person name="Preuss I."/>
            <person name="Lasbennes M.C."/>
            <person name="Sailer A.W."/>
            <person name="Suply T."/>
            <person name="Seuwen K."/>
            <person name="Parker C.N."/>
            <person name="Bassilana F."/>
        </authorList>
    </citation>
    <scope>INTERACTION WITH VGF</scope>
</reference>
<gene>
    <name type="primary">C3ar1</name>
</gene>
<comment type="function">
    <text>Receptor for the chemotactic and inflammatory peptide anaphylatoxin C3a. This receptor stimulates chemotaxis, granule enzyme release and superoxide anion production.</text>
</comment>
<comment type="subunit">
    <text evidence="6">Interacts with VGF-derived peptide TLQP-21.</text>
</comment>
<comment type="subcellular location">
    <subcellularLocation>
        <location>Cell membrane</location>
        <topology>Multi-pass membrane protein</topology>
    </subcellularLocation>
</comment>
<comment type="similarity">
    <text evidence="4">Belongs to the G-protein coupled receptor 1 family.</text>
</comment>
<evidence type="ECO:0000250" key="1"/>
<evidence type="ECO:0000250" key="2">
    <source>
        <dbReference type="UniProtKB" id="O09047"/>
    </source>
</evidence>
<evidence type="ECO:0000255" key="3"/>
<evidence type="ECO:0000255" key="4">
    <source>
        <dbReference type="PROSITE-ProRule" id="PRU00521"/>
    </source>
</evidence>
<evidence type="ECO:0000256" key="5">
    <source>
        <dbReference type="SAM" id="MobiDB-lite"/>
    </source>
</evidence>
<evidence type="ECO:0000269" key="6">
    <source>
    </source>
</evidence>
<protein>
    <recommendedName>
        <fullName>C3a anaphylatoxin chemotactic receptor</fullName>
        <shortName>C3AR</shortName>
        <shortName>C3a-R</shortName>
    </recommendedName>
</protein>
<keyword id="KW-1003">Cell membrane</keyword>
<keyword id="KW-0145">Chemotaxis</keyword>
<keyword id="KW-1015">Disulfide bond</keyword>
<keyword id="KW-0297">G-protein coupled receptor</keyword>
<keyword id="KW-0325">Glycoprotein</keyword>
<keyword id="KW-0472">Membrane</keyword>
<keyword id="KW-0597">Phosphoprotein</keyword>
<keyword id="KW-0675">Receptor</keyword>
<keyword id="KW-1185">Reference proteome</keyword>
<keyword id="KW-0765">Sulfation</keyword>
<keyword id="KW-0807">Transducer</keyword>
<keyword id="KW-0812">Transmembrane</keyword>
<keyword id="KW-1133">Transmembrane helix</keyword>
<name>C3AR_RAT</name>